<protein>
    <recommendedName>
        <fullName>Uncharacterized 28.9 kDa protein in xis 5'region</fullName>
    </recommendedName>
    <alternativeName>
        <fullName>ORF1</fullName>
    </alternativeName>
</protein>
<evidence type="ECO:0000256" key="1">
    <source>
        <dbReference type="SAM" id="MobiDB-lite"/>
    </source>
</evidence>
<keyword id="KW-0614">Plasmid</keyword>
<name>YXIS_SACER</name>
<proteinExistence type="predicted"/>
<feature type="chain" id="PRO_0000066549" description="Uncharacterized 28.9 kDa protein in xis 5'region">
    <location>
        <begin position="1"/>
        <end position="263"/>
    </location>
</feature>
<feature type="region of interest" description="Disordered" evidence="1">
    <location>
        <begin position="183"/>
        <end position="263"/>
    </location>
</feature>
<feature type="compositionally biased region" description="Polar residues" evidence="1">
    <location>
        <begin position="230"/>
        <end position="239"/>
    </location>
</feature>
<feature type="compositionally biased region" description="Polar residues" evidence="1">
    <location>
        <begin position="253"/>
        <end position="263"/>
    </location>
</feature>
<organism>
    <name type="scientific">Saccharopolyspora erythraea</name>
    <name type="common">Streptomyces erythraeus</name>
    <dbReference type="NCBI Taxonomy" id="1836"/>
    <lineage>
        <taxon>Bacteria</taxon>
        <taxon>Bacillati</taxon>
        <taxon>Actinomycetota</taxon>
        <taxon>Actinomycetes</taxon>
        <taxon>Pseudonocardiales</taxon>
        <taxon>Pseudonocardiaceae</taxon>
        <taxon>Saccharopolyspora</taxon>
    </lineage>
</organism>
<dbReference type="EMBL" id="M35138">
    <property type="protein sequence ID" value="AAA98343.1"/>
    <property type="molecule type" value="Genomic_DNA"/>
</dbReference>
<dbReference type="PIR" id="A35147">
    <property type="entry name" value="A35147"/>
</dbReference>
<dbReference type="InterPro" id="IPR022081">
    <property type="entry name" value="DUF3631"/>
</dbReference>
<dbReference type="Pfam" id="PF12307">
    <property type="entry name" value="DUF3631"/>
    <property type="match status" value="1"/>
</dbReference>
<comment type="function">
    <text>Probably does not play a direct role in plasmid integration or excision.</text>
</comment>
<comment type="miscellaneous">
    <text>The given protein N-terminal is putative, as other possibilities exist in ORF1.</text>
</comment>
<reference key="1">
    <citation type="journal article" date="1990" name="J. Bacteriol.">
        <title>Characterization of the genetic elements required for site-specific integration of plasmid pSE211 in Saccharopolyspora erythraea.</title>
        <authorList>
            <person name="Brown D.P."/>
            <person name="Idler K.B."/>
            <person name="Katz L."/>
        </authorList>
    </citation>
    <scope>NUCLEOTIDE SEQUENCE [GENOMIC DNA]</scope>
    <source>
        <strain>ER720</strain>
    </source>
</reference>
<geneLocation type="plasmid">
    <name>pSE211</name>
</geneLocation>
<sequence>MRRRAPGETVAPYRHRGDRRHLTALAKRLAAWLRASMPDLERAEPDMPLEDRAADTWEPLIIVADHAGGDWPTRARNAAVDLLAEAADNDQGSLRTRLLVDCRTAFGDHPTLSTTELLRQLNSDPEAPWPTYGKTGLNAAKLSKLLAEFDIRSANVRFPDGTQAKGYQRAHFFDAWTRYCPDAPHDRPEGVPSQPSQASHRRSERDGLTLWDGISRPNDEPDPDLWDGTSRPTAPSRPSLTCIGTAGTAGTDTPPSTNTKGAA</sequence>
<accession>P22875</accession>